<sequence length="88" mass="10235">MALLDFFLSRKKNTANIAKERLQIIVAERRRSDAEPHYLPQLRKDILEVICKYVQIDPEMVTVQLEQKDGDISILELNVTLPEAEELK</sequence>
<accession>B7LGT2</accession>
<gene>
    <name evidence="1" type="primary">minE</name>
    <name type="ordered locus">EC55989_1267</name>
</gene>
<protein>
    <recommendedName>
        <fullName evidence="1">Cell division topological specificity factor</fullName>
    </recommendedName>
</protein>
<comment type="function">
    <text evidence="1">Prevents the cell division inhibition by proteins MinC and MinD at internal division sites while permitting inhibition at polar sites. This ensures cell division at the proper site by restricting the formation of a division septum at the midpoint of the long axis of the cell.</text>
</comment>
<comment type="similarity">
    <text evidence="1">Belongs to the MinE family.</text>
</comment>
<keyword id="KW-0131">Cell cycle</keyword>
<keyword id="KW-0132">Cell division</keyword>
<keyword id="KW-1185">Reference proteome</keyword>
<evidence type="ECO:0000255" key="1">
    <source>
        <dbReference type="HAMAP-Rule" id="MF_00262"/>
    </source>
</evidence>
<dbReference type="EMBL" id="CU928145">
    <property type="protein sequence ID" value="CAU97126.1"/>
    <property type="molecule type" value="Genomic_DNA"/>
</dbReference>
<dbReference type="RefSeq" id="WP_001185665.1">
    <property type="nucleotide sequence ID" value="NZ_CP028304.1"/>
</dbReference>
<dbReference type="SMR" id="B7LGT2"/>
<dbReference type="GeneID" id="93776260"/>
<dbReference type="KEGG" id="eck:EC55989_1267"/>
<dbReference type="HOGENOM" id="CLU_137929_2_2_6"/>
<dbReference type="Proteomes" id="UP000000746">
    <property type="component" value="Chromosome"/>
</dbReference>
<dbReference type="GO" id="GO:0051301">
    <property type="term" value="P:cell division"/>
    <property type="evidence" value="ECO:0007669"/>
    <property type="project" value="UniProtKB-KW"/>
</dbReference>
<dbReference type="GO" id="GO:0032955">
    <property type="term" value="P:regulation of division septum assembly"/>
    <property type="evidence" value="ECO:0007669"/>
    <property type="project" value="InterPro"/>
</dbReference>
<dbReference type="FunFam" id="3.30.1070.10:FF:000001">
    <property type="entry name" value="Cell division topological specificity factor"/>
    <property type="match status" value="1"/>
</dbReference>
<dbReference type="Gene3D" id="3.30.1070.10">
    <property type="entry name" value="Cell division topological specificity factor MinE"/>
    <property type="match status" value="1"/>
</dbReference>
<dbReference type="HAMAP" id="MF_00262">
    <property type="entry name" value="MinE"/>
    <property type="match status" value="1"/>
</dbReference>
<dbReference type="InterPro" id="IPR005527">
    <property type="entry name" value="MinE"/>
</dbReference>
<dbReference type="InterPro" id="IPR036707">
    <property type="entry name" value="MinE_sf"/>
</dbReference>
<dbReference type="NCBIfam" id="TIGR01215">
    <property type="entry name" value="minE"/>
    <property type="match status" value="1"/>
</dbReference>
<dbReference type="NCBIfam" id="NF001422">
    <property type="entry name" value="PRK00296.1"/>
    <property type="match status" value="1"/>
</dbReference>
<dbReference type="Pfam" id="PF03776">
    <property type="entry name" value="MinE"/>
    <property type="match status" value="1"/>
</dbReference>
<dbReference type="SUPFAM" id="SSF55229">
    <property type="entry name" value="Cell division protein MinE topological specificity domain"/>
    <property type="match status" value="1"/>
</dbReference>
<name>MINE_ECO55</name>
<proteinExistence type="inferred from homology"/>
<feature type="chain" id="PRO_1000191277" description="Cell division topological specificity factor">
    <location>
        <begin position="1"/>
        <end position="88"/>
    </location>
</feature>
<reference key="1">
    <citation type="journal article" date="2009" name="PLoS Genet.">
        <title>Organised genome dynamics in the Escherichia coli species results in highly diverse adaptive paths.</title>
        <authorList>
            <person name="Touchon M."/>
            <person name="Hoede C."/>
            <person name="Tenaillon O."/>
            <person name="Barbe V."/>
            <person name="Baeriswyl S."/>
            <person name="Bidet P."/>
            <person name="Bingen E."/>
            <person name="Bonacorsi S."/>
            <person name="Bouchier C."/>
            <person name="Bouvet O."/>
            <person name="Calteau A."/>
            <person name="Chiapello H."/>
            <person name="Clermont O."/>
            <person name="Cruveiller S."/>
            <person name="Danchin A."/>
            <person name="Diard M."/>
            <person name="Dossat C."/>
            <person name="Karoui M.E."/>
            <person name="Frapy E."/>
            <person name="Garry L."/>
            <person name="Ghigo J.M."/>
            <person name="Gilles A.M."/>
            <person name="Johnson J."/>
            <person name="Le Bouguenec C."/>
            <person name="Lescat M."/>
            <person name="Mangenot S."/>
            <person name="Martinez-Jehanne V."/>
            <person name="Matic I."/>
            <person name="Nassif X."/>
            <person name="Oztas S."/>
            <person name="Petit M.A."/>
            <person name="Pichon C."/>
            <person name="Rouy Z."/>
            <person name="Ruf C.S."/>
            <person name="Schneider D."/>
            <person name="Tourret J."/>
            <person name="Vacherie B."/>
            <person name="Vallenet D."/>
            <person name="Medigue C."/>
            <person name="Rocha E.P.C."/>
            <person name="Denamur E."/>
        </authorList>
    </citation>
    <scope>NUCLEOTIDE SEQUENCE [LARGE SCALE GENOMIC DNA]</scope>
    <source>
        <strain>55989 / EAEC</strain>
    </source>
</reference>
<organism>
    <name type="scientific">Escherichia coli (strain 55989 / EAEC)</name>
    <dbReference type="NCBI Taxonomy" id="585055"/>
    <lineage>
        <taxon>Bacteria</taxon>
        <taxon>Pseudomonadati</taxon>
        <taxon>Pseudomonadota</taxon>
        <taxon>Gammaproteobacteria</taxon>
        <taxon>Enterobacterales</taxon>
        <taxon>Enterobacteriaceae</taxon>
        <taxon>Escherichia</taxon>
    </lineage>
</organism>